<name>TRPD_STAA2</name>
<proteinExistence type="inferred from homology"/>
<protein>
    <recommendedName>
        <fullName evidence="1">Anthranilate phosphoribosyltransferase</fullName>
        <ecNumber evidence="1">2.4.2.18</ecNumber>
    </recommendedName>
</protein>
<feature type="chain" id="PRO_1000099841" description="Anthranilate phosphoribosyltransferase">
    <location>
        <begin position="1"/>
        <end position="332"/>
    </location>
</feature>
<feature type="binding site" evidence="1">
    <location>
        <position position="78"/>
    </location>
    <ligand>
        <name>5-phospho-alpha-D-ribose 1-diphosphate</name>
        <dbReference type="ChEBI" id="CHEBI:58017"/>
    </ligand>
</feature>
<feature type="binding site" evidence="1">
    <location>
        <position position="78"/>
    </location>
    <ligand>
        <name>anthranilate</name>
        <dbReference type="ChEBI" id="CHEBI:16567"/>
        <label>1</label>
    </ligand>
</feature>
<feature type="binding site" evidence="1">
    <location>
        <begin position="81"/>
        <end position="82"/>
    </location>
    <ligand>
        <name>5-phospho-alpha-D-ribose 1-diphosphate</name>
        <dbReference type="ChEBI" id="CHEBI:58017"/>
    </ligand>
</feature>
<feature type="binding site" evidence="1">
    <location>
        <position position="86"/>
    </location>
    <ligand>
        <name>5-phospho-alpha-D-ribose 1-diphosphate</name>
        <dbReference type="ChEBI" id="CHEBI:58017"/>
    </ligand>
</feature>
<feature type="binding site" evidence="1">
    <location>
        <begin position="88"/>
        <end position="91"/>
    </location>
    <ligand>
        <name>5-phospho-alpha-D-ribose 1-diphosphate</name>
        <dbReference type="ChEBI" id="CHEBI:58017"/>
    </ligand>
</feature>
<feature type="binding site" evidence="1">
    <location>
        <position position="90"/>
    </location>
    <ligand>
        <name>Mg(2+)</name>
        <dbReference type="ChEBI" id="CHEBI:18420"/>
        <label>1</label>
    </ligand>
</feature>
<feature type="binding site" evidence="1">
    <location>
        <begin position="106"/>
        <end position="114"/>
    </location>
    <ligand>
        <name>5-phospho-alpha-D-ribose 1-diphosphate</name>
        <dbReference type="ChEBI" id="CHEBI:58017"/>
    </ligand>
</feature>
<feature type="binding site" evidence="1">
    <location>
        <position position="109"/>
    </location>
    <ligand>
        <name>anthranilate</name>
        <dbReference type="ChEBI" id="CHEBI:16567"/>
        <label>1</label>
    </ligand>
</feature>
<feature type="binding site" evidence="1">
    <location>
        <position position="118"/>
    </location>
    <ligand>
        <name>5-phospho-alpha-D-ribose 1-diphosphate</name>
        <dbReference type="ChEBI" id="CHEBI:58017"/>
    </ligand>
</feature>
<feature type="binding site" evidence="1">
    <location>
        <position position="163"/>
    </location>
    <ligand>
        <name>anthranilate</name>
        <dbReference type="ChEBI" id="CHEBI:16567"/>
        <label>2</label>
    </ligand>
</feature>
<feature type="binding site" evidence="1">
    <location>
        <position position="222"/>
    </location>
    <ligand>
        <name>Mg(2+)</name>
        <dbReference type="ChEBI" id="CHEBI:18420"/>
        <label>2</label>
    </ligand>
</feature>
<feature type="binding site" evidence="1">
    <location>
        <position position="223"/>
    </location>
    <ligand>
        <name>Mg(2+)</name>
        <dbReference type="ChEBI" id="CHEBI:18420"/>
        <label>1</label>
    </ligand>
</feature>
<feature type="binding site" evidence="1">
    <location>
        <position position="223"/>
    </location>
    <ligand>
        <name>Mg(2+)</name>
        <dbReference type="ChEBI" id="CHEBI:18420"/>
        <label>2</label>
    </ligand>
</feature>
<sequence length="332" mass="36526">MTLLTRIKTETILLESDIKELIDILISPSIGTDIKYELLSSYSEREIQQQELTYIVRSLINTMYPHQPCYEGAMCVCGTGGDKSNSFNISTTVAFVVASAGVKVIKHGNKSITSNSGSTDLLNQMNIQTTTVDDTPNQLNEKDLVFIGATESYPIMKYMQPVRKMIGKPTILNLVGPLINPYHLTYQMVGVFDPTKLKLVAKTIKDLGRKRAIVLHGANGMDEATLSGDNLIYELTEDGEIKNYTLNATDYGLKHAPNSDFKGGSPEENLAISLNILNGKDQSSRRDVVLLNAGLSLYVAEKVDTIAEGIELATTLIDNGEALKKYHQMRGE</sequence>
<organism>
    <name type="scientific">Staphylococcus aureus (strain JH1)</name>
    <dbReference type="NCBI Taxonomy" id="359787"/>
    <lineage>
        <taxon>Bacteria</taxon>
        <taxon>Bacillati</taxon>
        <taxon>Bacillota</taxon>
        <taxon>Bacilli</taxon>
        <taxon>Bacillales</taxon>
        <taxon>Staphylococcaceae</taxon>
        <taxon>Staphylococcus</taxon>
    </lineage>
</organism>
<gene>
    <name evidence="1" type="primary">trpD</name>
    <name type="ordered locus">SaurJH1_1459</name>
</gene>
<evidence type="ECO:0000255" key="1">
    <source>
        <dbReference type="HAMAP-Rule" id="MF_00211"/>
    </source>
</evidence>
<comment type="function">
    <text evidence="1">Catalyzes the transfer of the phosphoribosyl group of 5-phosphorylribose-1-pyrophosphate (PRPP) to anthranilate to yield N-(5'-phosphoribosyl)-anthranilate (PRA).</text>
</comment>
<comment type="catalytic activity">
    <reaction evidence="1">
        <text>N-(5-phospho-beta-D-ribosyl)anthranilate + diphosphate = 5-phospho-alpha-D-ribose 1-diphosphate + anthranilate</text>
        <dbReference type="Rhea" id="RHEA:11768"/>
        <dbReference type="ChEBI" id="CHEBI:16567"/>
        <dbReference type="ChEBI" id="CHEBI:18277"/>
        <dbReference type="ChEBI" id="CHEBI:33019"/>
        <dbReference type="ChEBI" id="CHEBI:58017"/>
        <dbReference type="EC" id="2.4.2.18"/>
    </reaction>
</comment>
<comment type="cofactor">
    <cofactor evidence="1">
        <name>Mg(2+)</name>
        <dbReference type="ChEBI" id="CHEBI:18420"/>
    </cofactor>
    <text evidence="1">Binds 2 magnesium ions per monomer.</text>
</comment>
<comment type="pathway">
    <text evidence="1">Amino-acid biosynthesis; L-tryptophan biosynthesis; L-tryptophan from chorismate: step 2/5.</text>
</comment>
<comment type="subunit">
    <text evidence="1">Homodimer.</text>
</comment>
<comment type="similarity">
    <text evidence="1">Belongs to the anthranilate phosphoribosyltransferase family.</text>
</comment>
<accession>A6U1J1</accession>
<dbReference type="EC" id="2.4.2.18" evidence="1"/>
<dbReference type="EMBL" id="CP000736">
    <property type="protein sequence ID" value="ABR52309.1"/>
    <property type="molecule type" value="Genomic_DNA"/>
</dbReference>
<dbReference type="SMR" id="A6U1J1"/>
<dbReference type="KEGG" id="sah:SaurJH1_1459"/>
<dbReference type="HOGENOM" id="CLU_034315_3_0_9"/>
<dbReference type="UniPathway" id="UPA00035">
    <property type="reaction ID" value="UER00041"/>
</dbReference>
<dbReference type="GO" id="GO:0005829">
    <property type="term" value="C:cytosol"/>
    <property type="evidence" value="ECO:0007669"/>
    <property type="project" value="TreeGrafter"/>
</dbReference>
<dbReference type="GO" id="GO:0004048">
    <property type="term" value="F:anthranilate phosphoribosyltransferase activity"/>
    <property type="evidence" value="ECO:0007669"/>
    <property type="project" value="UniProtKB-UniRule"/>
</dbReference>
<dbReference type="GO" id="GO:0000287">
    <property type="term" value="F:magnesium ion binding"/>
    <property type="evidence" value="ECO:0007669"/>
    <property type="project" value="UniProtKB-UniRule"/>
</dbReference>
<dbReference type="GO" id="GO:0000162">
    <property type="term" value="P:L-tryptophan biosynthetic process"/>
    <property type="evidence" value="ECO:0007669"/>
    <property type="project" value="UniProtKB-UniRule"/>
</dbReference>
<dbReference type="FunFam" id="3.40.1030.10:FF:000009">
    <property type="entry name" value="Anthranilate phosphoribosyltransferase"/>
    <property type="match status" value="1"/>
</dbReference>
<dbReference type="Gene3D" id="3.40.1030.10">
    <property type="entry name" value="Nucleoside phosphorylase/phosphoribosyltransferase catalytic domain"/>
    <property type="match status" value="1"/>
</dbReference>
<dbReference type="HAMAP" id="MF_00211">
    <property type="entry name" value="TrpD"/>
    <property type="match status" value="1"/>
</dbReference>
<dbReference type="InterPro" id="IPR005940">
    <property type="entry name" value="Anthranilate_Pribosyl_Tfrase"/>
</dbReference>
<dbReference type="InterPro" id="IPR000312">
    <property type="entry name" value="Glycosyl_Trfase_fam3"/>
</dbReference>
<dbReference type="InterPro" id="IPR035902">
    <property type="entry name" value="Nuc_phospho_transferase"/>
</dbReference>
<dbReference type="NCBIfam" id="TIGR01245">
    <property type="entry name" value="trpD"/>
    <property type="match status" value="1"/>
</dbReference>
<dbReference type="PANTHER" id="PTHR43285">
    <property type="entry name" value="ANTHRANILATE PHOSPHORIBOSYLTRANSFERASE"/>
    <property type="match status" value="1"/>
</dbReference>
<dbReference type="PANTHER" id="PTHR43285:SF2">
    <property type="entry name" value="ANTHRANILATE PHOSPHORIBOSYLTRANSFERASE"/>
    <property type="match status" value="1"/>
</dbReference>
<dbReference type="Pfam" id="PF00591">
    <property type="entry name" value="Glycos_transf_3"/>
    <property type="match status" value="1"/>
</dbReference>
<dbReference type="SUPFAM" id="SSF52418">
    <property type="entry name" value="Nucleoside phosphorylase/phosphoribosyltransferase catalytic domain"/>
    <property type="match status" value="1"/>
</dbReference>
<keyword id="KW-0028">Amino-acid biosynthesis</keyword>
<keyword id="KW-0057">Aromatic amino acid biosynthesis</keyword>
<keyword id="KW-0328">Glycosyltransferase</keyword>
<keyword id="KW-0460">Magnesium</keyword>
<keyword id="KW-0479">Metal-binding</keyword>
<keyword id="KW-0808">Transferase</keyword>
<keyword id="KW-0822">Tryptophan biosynthesis</keyword>
<reference key="1">
    <citation type="submission" date="2007-06" db="EMBL/GenBank/DDBJ databases">
        <title>Complete sequence of chromosome of Staphylococcus aureus subsp. aureus JH1.</title>
        <authorList>
            <consortium name="US DOE Joint Genome Institute"/>
            <person name="Copeland A."/>
            <person name="Lucas S."/>
            <person name="Lapidus A."/>
            <person name="Barry K."/>
            <person name="Detter J.C."/>
            <person name="Glavina del Rio T."/>
            <person name="Hammon N."/>
            <person name="Israni S."/>
            <person name="Dalin E."/>
            <person name="Tice H."/>
            <person name="Pitluck S."/>
            <person name="Chain P."/>
            <person name="Malfatti S."/>
            <person name="Shin M."/>
            <person name="Vergez L."/>
            <person name="Schmutz J."/>
            <person name="Larimer F."/>
            <person name="Land M."/>
            <person name="Hauser L."/>
            <person name="Kyrpides N."/>
            <person name="Ivanova N."/>
            <person name="Tomasz A."/>
            <person name="Richardson P."/>
        </authorList>
    </citation>
    <scope>NUCLEOTIDE SEQUENCE [LARGE SCALE GENOMIC DNA]</scope>
    <source>
        <strain>JH1</strain>
    </source>
</reference>